<evidence type="ECO:0000255" key="1">
    <source>
        <dbReference type="HAMAP-Rule" id="MF_00378"/>
    </source>
</evidence>
<comment type="function">
    <text evidence="1">Bidirectionally degrades single-stranded DNA into large acid-insoluble oligonucleotides, which are then degraded further into small acid-soluble oligonucleotides.</text>
</comment>
<comment type="catalytic activity">
    <reaction evidence="1">
        <text>Exonucleolytic cleavage in either 5'- to 3'- or 3'- to 5'-direction to yield nucleoside 5'-phosphates.</text>
        <dbReference type="EC" id="3.1.11.6"/>
    </reaction>
</comment>
<comment type="subunit">
    <text evidence="1">Heterooligomer composed of large and small subunits.</text>
</comment>
<comment type="subcellular location">
    <subcellularLocation>
        <location evidence="1">Cytoplasm</location>
    </subcellularLocation>
</comment>
<comment type="similarity">
    <text evidence="1">Belongs to the XseA family.</text>
</comment>
<dbReference type="EC" id="3.1.11.6" evidence="1"/>
<dbReference type="EMBL" id="CP000409">
    <property type="protein sequence ID" value="ABV73819.1"/>
    <property type="molecule type" value="Genomic_DNA"/>
</dbReference>
<dbReference type="RefSeq" id="WP_012149014.1">
    <property type="nucleotide sequence ID" value="NC_009879.1"/>
</dbReference>
<dbReference type="SMR" id="A8EZN6"/>
<dbReference type="STRING" id="293613.A1E_04470"/>
<dbReference type="KEGG" id="rcm:A1E_04470"/>
<dbReference type="eggNOG" id="COG1570">
    <property type="taxonomic scope" value="Bacteria"/>
</dbReference>
<dbReference type="HOGENOM" id="CLU_023625_2_0_5"/>
<dbReference type="Proteomes" id="UP000007056">
    <property type="component" value="Chromosome"/>
</dbReference>
<dbReference type="GO" id="GO:0005737">
    <property type="term" value="C:cytoplasm"/>
    <property type="evidence" value="ECO:0007669"/>
    <property type="project" value="UniProtKB-SubCell"/>
</dbReference>
<dbReference type="GO" id="GO:0009318">
    <property type="term" value="C:exodeoxyribonuclease VII complex"/>
    <property type="evidence" value="ECO:0007669"/>
    <property type="project" value="InterPro"/>
</dbReference>
<dbReference type="GO" id="GO:0008855">
    <property type="term" value="F:exodeoxyribonuclease VII activity"/>
    <property type="evidence" value="ECO:0007669"/>
    <property type="project" value="UniProtKB-UniRule"/>
</dbReference>
<dbReference type="GO" id="GO:0003676">
    <property type="term" value="F:nucleic acid binding"/>
    <property type="evidence" value="ECO:0007669"/>
    <property type="project" value="InterPro"/>
</dbReference>
<dbReference type="GO" id="GO:0006308">
    <property type="term" value="P:DNA catabolic process"/>
    <property type="evidence" value="ECO:0007669"/>
    <property type="project" value="UniProtKB-UniRule"/>
</dbReference>
<dbReference type="CDD" id="cd04489">
    <property type="entry name" value="ExoVII_LU_OBF"/>
    <property type="match status" value="1"/>
</dbReference>
<dbReference type="HAMAP" id="MF_00378">
    <property type="entry name" value="Exonuc_7_L"/>
    <property type="match status" value="1"/>
</dbReference>
<dbReference type="InterPro" id="IPR003753">
    <property type="entry name" value="Exonuc_VII_L"/>
</dbReference>
<dbReference type="InterPro" id="IPR020579">
    <property type="entry name" value="Exonuc_VII_lsu_C"/>
</dbReference>
<dbReference type="InterPro" id="IPR025824">
    <property type="entry name" value="OB-fold_nuc-bd_dom"/>
</dbReference>
<dbReference type="NCBIfam" id="TIGR00237">
    <property type="entry name" value="xseA"/>
    <property type="match status" value="1"/>
</dbReference>
<dbReference type="PANTHER" id="PTHR30008">
    <property type="entry name" value="EXODEOXYRIBONUCLEASE 7 LARGE SUBUNIT"/>
    <property type="match status" value="1"/>
</dbReference>
<dbReference type="PANTHER" id="PTHR30008:SF0">
    <property type="entry name" value="EXODEOXYRIBONUCLEASE 7 LARGE SUBUNIT"/>
    <property type="match status" value="1"/>
</dbReference>
<dbReference type="Pfam" id="PF02601">
    <property type="entry name" value="Exonuc_VII_L"/>
    <property type="match status" value="1"/>
</dbReference>
<dbReference type="Pfam" id="PF13742">
    <property type="entry name" value="tRNA_anti_2"/>
    <property type="match status" value="1"/>
</dbReference>
<keyword id="KW-0963">Cytoplasm</keyword>
<keyword id="KW-0269">Exonuclease</keyword>
<keyword id="KW-0378">Hydrolase</keyword>
<keyword id="KW-0540">Nuclease</keyword>
<gene>
    <name evidence="1" type="primary">xseA</name>
    <name type="ordered locus">A1E_04470</name>
</gene>
<reference key="1">
    <citation type="submission" date="2007-09" db="EMBL/GenBank/DDBJ databases">
        <title>Complete genome sequence of Rickettsia canadensis.</title>
        <authorList>
            <person name="Madan A."/>
            <person name="Fahey J."/>
            <person name="Helton E."/>
            <person name="Ketteman M."/>
            <person name="Madan A."/>
            <person name="Rodrigues S."/>
            <person name="Sanchez A."/>
            <person name="Whiting M."/>
            <person name="Dasch G."/>
            <person name="Eremeeva M."/>
        </authorList>
    </citation>
    <scope>NUCLEOTIDE SEQUENCE [LARGE SCALE GENOMIC DNA]</scope>
    <source>
        <strain>McKiel</strain>
    </source>
</reference>
<organism>
    <name type="scientific">Rickettsia canadensis (strain McKiel)</name>
    <dbReference type="NCBI Taxonomy" id="293613"/>
    <lineage>
        <taxon>Bacteria</taxon>
        <taxon>Pseudomonadati</taxon>
        <taxon>Pseudomonadota</taxon>
        <taxon>Alphaproteobacteria</taxon>
        <taxon>Rickettsiales</taxon>
        <taxon>Rickettsiaceae</taxon>
        <taxon>Rickettsieae</taxon>
        <taxon>Rickettsia</taxon>
        <taxon>belli group</taxon>
    </lineage>
</organism>
<name>EX7L_RICCK</name>
<protein>
    <recommendedName>
        <fullName evidence="1">Exodeoxyribonuclease 7 large subunit</fullName>
        <ecNumber evidence="1">3.1.11.6</ecNumber>
    </recommendedName>
    <alternativeName>
        <fullName evidence="1">Exodeoxyribonuclease VII large subunit</fullName>
        <shortName evidence="1">Exonuclease VII large subunit</shortName>
    </alternativeName>
</protein>
<proteinExistence type="inferred from homology"/>
<sequence length="444" mass="49909">MLDNFIVNQATKEFSVSEISNKIKELLENNFGYIKIKGEISGFKIASSGHAYFNLKENTAILACTCWRPTLAKIKFPLKDGMEVVISGKLSSYAGNSRYQLAVDNLQPAGLGTMLQILNERKTRLEKEGLFNKRRIPIPFLPTRIGVITSITGAVIKDIIHRIRERFPTHIIIWPVSVQGENSGNEIAAAIEGFNKLEEANKPSVIIVARGGGSIEDLWSFNDEILVRAAYNSKIPIISAVGHEVDYTLIDLAADKRAPTPTAAAEFAVPVRSILNNTLQSYEKVLLNNTKQLINYHEQNIANYDKIHRYLTNYINHRQQLLDETGFNLLDVLPCFIELQETKLKFCSKERINPAKIINYKTLELTHQTAYLSKSANNTLKNFEYKLELNSTLLASLDYHNVLKRGFAIVKGAMGNFLSSKITAADEKIFNIKFSDGEIKVVRN</sequence>
<feature type="chain" id="PRO_1000048782" description="Exodeoxyribonuclease 7 large subunit">
    <location>
        <begin position="1"/>
        <end position="444"/>
    </location>
</feature>
<accession>A8EZN6</accession>